<dbReference type="EMBL" id="AC004146">
    <property type="protein sequence ID" value="AAD10664.1"/>
    <property type="molecule type" value="Genomic_DNA"/>
</dbReference>
<dbReference type="EMBL" id="CP002684">
    <property type="protein sequence ID" value="AEE34610.1"/>
    <property type="molecule type" value="Genomic_DNA"/>
</dbReference>
<dbReference type="EMBL" id="CP002684">
    <property type="protein sequence ID" value="AEE34611.1"/>
    <property type="molecule type" value="Genomic_DNA"/>
</dbReference>
<dbReference type="EMBL" id="AK118793">
    <property type="protein sequence ID" value="BAC43384.1"/>
    <property type="molecule type" value="mRNA"/>
</dbReference>
<dbReference type="PIR" id="H96695">
    <property type="entry name" value="H96695"/>
</dbReference>
<dbReference type="RefSeq" id="NP_001185338.1">
    <property type="nucleotide sequence ID" value="NM_001198409.2"/>
</dbReference>
<dbReference type="RefSeq" id="NP_176890.1">
    <property type="nucleotide sequence ID" value="NM_105389.4"/>
</dbReference>
<dbReference type="BioGRID" id="28260">
    <property type="interactions" value="8"/>
</dbReference>
<dbReference type="FunCoup" id="Q9ZW88">
    <property type="interactions" value="1783"/>
</dbReference>
<dbReference type="STRING" id="3702.Q9ZW88"/>
<dbReference type="PaxDb" id="3702-AT1G67190.2"/>
<dbReference type="ProteomicsDB" id="230708"/>
<dbReference type="EnsemblPlants" id="AT1G67190.1">
    <property type="protein sequence ID" value="AT1G67190.1"/>
    <property type="gene ID" value="AT1G67190"/>
</dbReference>
<dbReference type="EnsemblPlants" id="AT1G67190.2">
    <property type="protein sequence ID" value="AT1G67190.2"/>
    <property type="gene ID" value="AT1G67190"/>
</dbReference>
<dbReference type="GeneID" id="843039"/>
<dbReference type="Gramene" id="AT1G67190.1">
    <property type="protein sequence ID" value="AT1G67190.1"/>
    <property type="gene ID" value="AT1G67190"/>
</dbReference>
<dbReference type="Gramene" id="AT1G67190.2">
    <property type="protein sequence ID" value="AT1G67190.2"/>
    <property type="gene ID" value="AT1G67190"/>
</dbReference>
<dbReference type="KEGG" id="ath:AT1G67190"/>
<dbReference type="Araport" id="AT1G67190"/>
<dbReference type="TAIR" id="AT1G67190"/>
<dbReference type="eggNOG" id="ENOG502QUB6">
    <property type="taxonomic scope" value="Eukaryota"/>
</dbReference>
<dbReference type="HOGENOM" id="CLU_038311_0_0_1"/>
<dbReference type="InParanoid" id="Q9ZW88"/>
<dbReference type="OMA" id="ACPMIES"/>
<dbReference type="OrthoDB" id="1891924at2759"/>
<dbReference type="PhylomeDB" id="Q9ZW88"/>
<dbReference type="PRO" id="PR:Q9ZW88"/>
<dbReference type="Proteomes" id="UP000006548">
    <property type="component" value="Chromosome 1"/>
</dbReference>
<dbReference type="ExpressionAtlas" id="Q9ZW88">
    <property type="expression patterns" value="baseline and differential"/>
</dbReference>
<dbReference type="GO" id="GO:0005737">
    <property type="term" value="C:cytoplasm"/>
    <property type="evidence" value="ECO:0000314"/>
    <property type="project" value="TAIR"/>
</dbReference>
<dbReference type="CDD" id="cd09917">
    <property type="entry name" value="F-box_SF"/>
    <property type="match status" value="1"/>
</dbReference>
<dbReference type="Gene3D" id="1.20.1280.50">
    <property type="match status" value="1"/>
</dbReference>
<dbReference type="Gene3D" id="3.80.10.10">
    <property type="entry name" value="Ribonuclease Inhibitor"/>
    <property type="match status" value="1"/>
</dbReference>
<dbReference type="InterPro" id="IPR036047">
    <property type="entry name" value="F-box-like_dom_sf"/>
</dbReference>
<dbReference type="InterPro" id="IPR001810">
    <property type="entry name" value="F-box_dom"/>
</dbReference>
<dbReference type="InterPro" id="IPR032675">
    <property type="entry name" value="LRR_dom_sf"/>
</dbReference>
<dbReference type="InterPro" id="IPR055411">
    <property type="entry name" value="LRR_FXL15/At3g58940/PEG3-like"/>
</dbReference>
<dbReference type="PANTHER" id="PTHR31639">
    <property type="entry name" value="F-BOX PROTEIN-LIKE"/>
    <property type="match status" value="1"/>
</dbReference>
<dbReference type="PANTHER" id="PTHR31639:SF139">
    <property type="entry name" value="F-BOX_LRR PLANT PROTEIN"/>
    <property type="match status" value="1"/>
</dbReference>
<dbReference type="Pfam" id="PF12937">
    <property type="entry name" value="F-box-like"/>
    <property type="match status" value="1"/>
</dbReference>
<dbReference type="Pfam" id="PF24758">
    <property type="entry name" value="LRR_At5g56370"/>
    <property type="match status" value="1"/>
</dbReference>
<dbReference type="SMART" id="SM00256">
    <property type="entry name" value="FBOX"/>
    <property type="match status" value="1"/>
</dbReference>
<dbReference type="SUPFAM" id="SSF81383">
    <property type="entry name" value="F-box domain"/>
    <property type="match status" value="1"/>
</dbReference>
<dbReference type="SUPFAM" id="SSF52047">
    <property type="entry name" value="RNI-like"/>
    <property type="match status" value="1"/>
</dbReference>
<protein>
    <recommendedName>
        <fullName>F-box/LRR-repeat protein At1g67190</fullName>
    </recommendedName>
</protein>
<proteinExistence type="evidence at transcript level"/>
<reference key="1">
    <citation type="journal article" date="2000" name="Nature">
        <title>Sequence and analysis of chromosome 1 of the plant Arabidopsis thaliana.</title>
        <authorList>
            <person name="Theologis A."/>
            <person name="Ecker J.R."/>
            <person name="Palm C.J."/>
            <person name="Federspiel N.A."/>
            <person name="Kaul S."/>
            <person name="White O."/>
            <person name="Alonso J."/>
            <person name="Altafi H."/>
            <person name="Araujo R."/>
            <person name="Bowman C.L."/>
            <person name="Brooks S.Y."/>
            <person name="Buehler E."/>
            <person name="Chan A."/>
            <person name="Chao Q."/>
            <person name="Chen H."/>
            <person name="Cheuk R.F."/>
            <person name="Chin C.W."/>
            <person name="Chung M.K."/>
            <person name="Conn L."/>
            <person name="Conway A.B."/>
            <person name="Conway A.R."/>
            <person name="Creasy T.H."/>
            <person name="Dewar K."/>
            <person name="Dunn P."/>
            <person name="Etgu P."/>
            <person name="Feldblyum T.V."/>
            <person name="Feng J.-D."/>
            <person name="Fong B."/>
            <person name="Fujii C.Y."/>
            <person name="Gill J.E."/>
            <person name="Goldsmith A.D."/>
            <person name="Haas B."/>
            <person name="Hansen N.F."/>
            <person name="Hughes B."/>
            <person name="Huizar L."/>
            <person name="Hunter J.L."/>
            <person name="Jenkins J."/>
            <person name="Johnson-Hopson C."/>
            <person name="Khan S."/>
            <person name="Khaykin E."/>
            <person name="Kim C.J."/>
            <person name="Koo H.L."/>
            <person name="Kremenetskaia I."/>
            <person name="Kurtz D.B."/>
            <person name="Kwan A."/>
            <person name="Lam B."/>
            <person name="Langin-Hooper S."/>
            <person name="Lee A."/>
            <person name="Lee J.M."/>
            <person name="Lenz C.A."/>
            <person name="Li J.H."/>
            <person name="Li Y.-P."/>
            <person name="Lin X."/>
            <person name="Liu S.X."/>
            <person name="Liu Z.A."/>
            <person name="Luros J.S."/>
            <person name="Maiti R."/>
            <person name="Marziali A."/>
            <person name="Militscher J."/>
            <person name="Miranda M."/>
            <person name="Nguyen M."/>
            <person name="Nierman W.C."/>
            <person name="Osborne B.I."/>
            <person name="Pai G."/>
            <person name="Peterson J."/>
            <person name="Pham P.K."/>
            <person name="Rizzo M."/>
            <person name="Rooney T."/>
            <person name="Rowley D."/>
            <person name="Sakano H."/>
            <person name="Salzberg S.L."/>
            <person name="Schwartz J.R."/>
            <person name="Shinn P."/>
            <person name="Southwick A.M."/>
            <person name="Sun H."/>
            <person name="Tallon L.J."/>
            <person name="Tambunga G."/>
            <person name="Toriumi M.J."/>
            <person name="Town C.D."/>
            <person name="Utterback T."/>
            <person name="Van Aken S."/>
            <person name="Vaysberg M."/>
            <person name="Vysotskaia V.S."/>
            <person name="Walker M."/>
            <person name="Wu D."/>
            <person name="Yu G."/>
            <person name="Fraser C.M."/>
            <person name="Venter J.C."/>
            <person name="Davis R.W."/>
        </authorList>
    </citation>
    <scope>NUCLEOTIDE SEQUENCE [LARGE SCALE GENOMIC DNA]</scope>
    <source>
        <strain>cv. Columbia</strain>
    </source>
</reference>
<reference key="2">
    <citation type="journal article" date="2017" name="Plant J.">
        <title>Araport11: a complete reannotation of the Arabidopsis thaliana reference genome.</title>
        <authorList>
            <person name="Cheng C.Y."/>
            <person name="Krishnakumar V."/>
            <person name="Chan A.P."/>
            <person name="Thibaud-Nissen F."/>
            <person name="Schobel S."/>
            <person name="Town C.D."/>
        </authorList>
    </citation>
    <scope>GENOME REANNOTATION</scope>
    <source>
        <strain>cv. Columbia</strain>
    </source>
</reference>
<reference key="3">
    <citation type="journal article" date="2002" name="Science">
        <title>Functional annotation of a full-length Arabidopsis cDNA collection.</title>
        <authorList>
            <person name="Seki M."/>
            <person name="Narusaka M."/>
            <person name="Kamiya A."/>
            <person name="Ishida J."/>
            <person name="Satou M."/>
            <person name="Sakurai T."/>
            <person name="Nakajima M."/>
            <person name="Enju A."/>
            <person name="Akiyama K."/>
            <person name="Oono Y."/>
            <person name="Muramatsu M."/>
            <person name="Hayashizaki Y."/>
            <person name="Kawai J."/>
            <person name="Carninci P."/>
            <person name="Itoh M."/>
            <person name="Ishii Y."/>
            <person name="Arakawa T."/>
            <person name="Shibata K."/>
            <person name="Shinagawa A."/>
            <person name="Shinozaki K."/>
        </authorList>
    </citation>
    <scope>NUCLEOTIDE SEQUENCE [LARGE SCALE MRNA]</scope>
    <source>
        <strain>cv. Columbia</strain>
    </source>
</reference>
<feature type="chain" id="PRO_0000281935" description="F-box/LRR-repeat protein At1g67190">
    <location>
        <begin position="1"/>
        <end position="419"/>
    </location>
</feature>
<feature type="domain" description="F-box">
    <location>
        <begin position="1"/>
        <end position="48"/>
    </location>
</feature>
<feature type="repeat" description="LRR 1">
    <location>
        <begin position="53"/>
        <end position="82"/>
    </location>
</feature>
<feature type="repeat" description="LRR 2">
    <location>
        <begin position="96"/>
        <end position="124"/>
    </location>
</feature>
<feature type="repeat" description="LRR 3">
    <location>
        <begin position="133"/>
        <end position="157"/>
    </location>
</feature>
<feature type="repeat" description="LRR 4">
    <location>
        <begin position="158"/>
        <end position="183"/>
    </location>
</feature>
<feature type="repeat" description="LRR 5">
    <location>
        <begin position="185"/>
        <end position="209"/>
    </location>
</feature>
<feature type="repeat" description="LRR 6">
    <location>
        <begin position="245"/>
        <end position="272"/>
    </location>
</feature>
<feature type="repeat" description="LRR 7">
    <location>
        <begin position="273"/>
        <end position="297"/>
    </location>
</feature>
<feature type="repeat" description="LRR 8">
    <location>
        <begin position="301"/>
        <end position="326"/>
    </location>
</feature>
<feature type="repeat" description="LRR 9">
    <location>
        <begin position="356"/>
        <end position="381"/>
    </location>
</feature>
<feature type="sequence conflict" description="In Ref. 3; BAC43384." evidence="1" ref="3">
    <original>Y</original>
    <variation>C</variation>
    <location>
        <position position="99"/>
    </location>
</feature>
<gene>
    <name type="ordered locus">At1g67190</name>
    <name type="ORF">F5A8.10</name>
</gene>
<evidence type="ECO:0000305" key="1"/>
<accession>Q9ZW88</accession>
<accession>Q8GWJ9</accession>
<keyword id="KW-0433">Leucine-rich repeat</keyword>
<keyword id="KW-1185">Reference proteome</keyword>
<keyword id="KW-0677">Repeat</keyword>
<organism>
    <name type="scientific">Arabidopsis thaliana</name>
    <name type="common">Mouse-ear cress</name>
    <dbReference type="NCBI Taxonomy" id="3702"/>
    <lineage>
        <taxon>Eukaryota</taxon>
        <taxon>Viridiplantae</taxon>
        <taxon>Streptophyta</taxon>
        <taxon>Embryophyta</taxon>
        <taxon>Tracheophyta</taxon>
        <taxon>Spermatophyta</taxon>
        <taxon>Magnoliopsida</taxon>
        <taxon>eudicotyledons</taxon>
        <taxon>Gunneridae</taxon>
        <taxon>Pentapetalae</taxon>
        <taxon>rosids</taxon>
        <taxon>malvids</taxon>
        <taxon>Brassicales</taxon>
        <taxon>Brassicaceae</taxon>
        <taxon>Camelineae</taxon>
        <taxon>Arabidopsis</taxon>
    </lineage>
</organism>
<sequence>MDYLPVEVIGNILSRLGGARDVVIASATCRKWREACRKHLQTLSFNSADWPFYRDLTTNRLEILITQTIFQTMGLQGLSIMMDDANKFSAATVIAWLMYTRDTLRRLSYNVRTTPNVNILEICGRQKLEALVLAHNSITGVEPSFQRFPCLKSLSLSYVSISALDLNLLLSACPMIESLELVSLEIAMSDAQVTIELSSPTLKSVYFDGISLDKFILEADSIEFLHMKDCVLELFELIGNGTLKHFKLDDVSVIHLDIMETSESLEVVDVNHFTMVWPKFYQMISRSQKLKKLRLWDVVFDDDDEIIDVESIAAGFSHLTHLSLSYDLKDGAAHYSLQGTTQLENVTVLELGWTVINDVFSIWVEELLRRCPNLKKLIIYGVVSETKTQGDCQILATFTWSIVQLMRKYIHVEVQFEYE</sequence>
<name>FBL34_ARATH</name>